<keyword id="KW-1003">Cell membrane</keyword>
<keyword id="KW-0968">Cytoplasmic vesicle</keyword>
<keyword id="KW-0472">Membrane</keyword>
<keyword id="KW-1185">Reference proteome</keyword>
<keyword id="KW-0677">Repeat</keyword>
<keyword id="KW-0770">Synapse</keyword>
<keyword id="KW-0812">Transmembrane</keyword>
<keyword id="KW-1133">Transmembrane helix</keyword>
<organism>
    <name type="scientific">Gallus gallus</name>
    <name type="common">Chicken</name>
    <dbReference type="NCBI Taxonomy" id="9031"/>
    <lineage>
        <taxon>Eukaryota</taxon>
        <taxon>Metazoa</taxon>
        <taxon>Chordata</taxon>
        <taxon>Craniata</taxon>
        <taxon>Vertebrata</taxon>
        <taxon>Euteleostomi</taxon>
        <taxon>Archelosauria</taxon>
        <taxon>Archosauria</taxon>
        <taxon>Dinosauria</taxon>
        <taxon>Saurischia</taxon>
        <taxon>Theropoda</taxon>
        <taxon>Coelurosauria</taxon>
        <taxon>Aves</taxon>
        <taxon>Neognathae</taxon>
        <taxon>Galloanserae</taxon>
        <taxon>Galliformes</taxon>
        <taxon>Phasianidae</taxon>
        <taxon>Phasianinae</taxon>
        <taxon>Gallus</taxon>
    </lineage>
</organism>
<protein>
    <recommendedName>
        <fullName>Solute carrier family 35 member G2</fullName>
    </recommendedName>
    <alternativeName>
        <fullName>Transmembrane protein 22</fullName>
    </alternativeName>
</protein>
<reference key="1">
    <citation type="journal article" date="2005" name="Genome Biol.">
        <title>Full-length cDNAs from chicken bursal lymphocytes to facilitate gene function analysis.</title>
        <authorList>
            <person name="Caldwell R.B."/>
            <person name="Kierzek A.M."/>
            <person name="Arakawa H."/>
            <person name="Bezzubov Y."/>
            <person name="Zaim J."/>
            <person name="Fiedler P."/>
            <person name="Kutter S."/>
            <person name="Blagodatski A."/>
            <person name="Kostovska D."/>
            <person name="Koter M."/>
            <person name="Plachy J."/>
            <person name="Carninci P."/>
            <person name="Hayashizaki Y."/>
            <person name="Buerstedde J.-M."/>
        </authorList>
    </citation>
    <scope>NUCLEOTIDE SEQUENCE [LARGE SCALE MRNA]</scope>
    <source>
        <strain>CB</strain>
        <tissue>Bursa of Fabricius</tissue>
    </source>
</reference>
<feature type="chain" id="PRO_0000244467" description="Solute carrier family 35 member G2">
    <location>
        <begin position="1"/>
        <end position="411"/>
    </location>
</feature>
<feature type="transmembrane region" description="Helical" evidence="2">
    <location>
        <begin position="104"/>
        <end position="124"/>
    </location>
</feature>
<feature type="transmembrane region" description="Helical" evidence="2">
    <location>
        <begin position="130"/>
        <end position="150"/>
    </location>
</feature>
<feature type="transmembrane region" description="Helical" evidence="2">
    <location>
        <begin position="168"/>
        <end position="188"/>
    </location>
</feature>
<feature type="transmembrane region" description="Helical" evidence="2">
    <location>
        <begin position="193"/>
        <end position="213"/>
    </location>
</feature>
<feature type="transmembrane region" description="Helical" evidence="2">
    <location>
        <begin position="217"/>
        <end position="237"/>
    </location>
</feature>
<feature type="transmembrane region" description="Helical" evidence="2">
    <location>
        <begin position="254"/>
        <end position="274"/>
    </location>
</feature>
<feature type="transmembrane region" description="Helical" evidence="2">
    <location>
        <begin position="285"/>
        <end position="305"/>
    </location>
</feature>
<feature type="transmembrane region" description="Helical" evidence="2">
    <location>
        <begin position="318"/>
        <end position="338"/>
    </location>
</feature>
<feature type="transmembrane region" description="Helical" evidence="2">
    <location>
        <begin position="345"/>
        <end position="365"/>
    </location>
</feature>
<feature type="transmembrane region" description="Helical" evidence="2">
    <location>
        <begin position="367"/>
        <end position="387"/>
    </location>
</feature>
<feature type="domain" description="EamA 1">
    <location>
        <begin position="112"/>
        <end position="237"/>
    </location>
</feature>
<feature type="domain" description="EamA 2">
    <location>
        <begin position="261"/>
        <end position="389"/>
    </location>
</feature>
<dbReference type="EMBL" id="AJ720290">
    <property type="protein sequence ID" value="CAG31949.1"/>
    <property type="molecule type" value="mRNA"/>
</dbReference>
<dbReference type="RefSeq" id="NP_001026470.1">
    <property type="nucleotide sequence ID" value="NM_001031299.1"/>
</dbReference>
<dbReference type="RefSeq" id="XP_015146822.4">
    <property type="nucleotide sequence ID" value="XM_015291336.4"/>
</dbReference>
<dbReference type="RefSeq" id="XP_046754307.1">
    <property type="nucleotide sequence ID" value="XM_046898351.1"/>
</dbReference>
<dbReference type="RefSeq" id="XP_046754308.1">
    <property type="nucleotide sequence ID" value="XM_046898352.1"/>
</dbReference>
<dbReference type="RefSeq" id="XP_046754309.1">
    <property type="nucleotide sequence ID" value="XM_046898353.1"/>
</dbReference>
<dbReference type="RefSeq" id="XP_046754310.1">
    <property type="nucleotide sequence ID" value="XM_046898354.1"/>
</dbReference>
<dbReference type="RefSeq" id="XP_046754311.1">
    <property type="nucleotide sequence ID" value="XM_046898355.1"/>
</dbReference>
<dbReference type="RefSeq" id="XP_046779663.1">
    <property type="nucleotide sequence ID" value="XM_046923707.1"/>
</dbReference>
<dbReference type="RefSeq" id="XP_046779664.1">
    <property type="nucleotide sequence ID" value="XM_046923708.1"/>
</dbReference>
<dbReference type="RefSeq" id="XP_046779666.1">
    <property type="nucleotide sequence ID" value="XM_046923710.1"/>
</dbReference>
<dbReference type="RefSeq" id="XP_046779667.1">
    <property type="nucleotide sequence ID" value="XM_046923711.1"/>
</dbReference>
<dbReference type="RefSeq" id="XP_046779668.1">
    <property type="nucleotide sequence ID" value="XM_046923712.1"/>
</dbReference>
<dbReference type="RefSeq" id="XP_046779669.1">
    <property type="nucleotide sequence ID" value="XM_046923713.1"/>
</dbReference>
<dbReference type="SMR" id="Q5ZJZ4"/>
<dbReference type="FunCoup" id="Q5ZJZ4">
    <property type="interactions" value="15"/>
</dbReference>
<dbReference type="STRING" id="9031.ENSGALP00000058021"/>
<dbReference type="PaxDb" id="9031-ENSGALP00000001962"/>
<dbReference type="Ensembl" id="ENSGALT00010062078.1">
    <property type="protein sequence ID" value="ENSGALP00010038359.1"/>
    <property type="gene ID" value="ENSGALG00010025427.1"/>
</dbReference>
<dbReference type="Ensembl" id="ENSGALT00010062084.1">
    <property type="protein sequence ID" value="ENSGALP00010038365.1"/>
    <property type="gene ID" value="ENSGALG00010025427.1"/>
</dbReference>
<dbReference type="Ensembl" id="ENSGALT00010062090.1">
    <property type="protein sequence ID" value="ENSGALP00010038371.1"/>
    <property type="gene ID" value="ENSGALG00010025427.1"/>
</dbReference>
<dbReference type="GeneID" id="424738"/>
<dbReference type="KEGG" id="gga:424738"/>
<dbReference type="CTD" id="80723"/>
<dbReference type="VEuPathDB" id="HostDB:geneid_424738"/>
<dbReference type="eggNOG" id="ENOG502QV4H">
    <property type="taxonomic scope" value="Eukaryota"/>
</dbReference>
<dbReference type="GeneTree" id="ENSGT00940000153249"/>
<dbReference type="InParanoid" id="Q5ZJZ4"/>
<dbReference type="OrthoDB" id="306876at2759"/>
<dbReference type="PhylomeDB" id="Q5ZJZ4"/>
<dbReference type="PRO" id="PR:Q5ZJZ4"/>
<dbReference type="Proteomes" id="UP000000539">
    <property type="component" value="Chromosome 9"/>
</dbReference>
<dbReference type="GO" id="GO:0005886">
    <property type="term" value="C:plasma membrane"/>
    <property type="evidence" value="ECO:0000318"/>
    <property type="project" value="GO_Central"/>
</dbReference>
<dbReference type="GO" id="GO:0030672">
    <property type="term" value="C:synaptic vesicle membrane"/>
    <property type="evidence" value="ECO:0007669"/>
    <property type="project" value="UniProtKB-SubCell"/>
</dbReference>
<dbReference type="InterPro" id="IPR000620">
    <property type="entry name" value="EamA_dom"/>
</dbReference>
<dbReference type="PANTHER" id="PTHR22911">
    <property type="entry name" value="ACYL-MALONYL CONDENSING ENZYME-RELATED"/>
    <property type="match status" value="1"/>
</dbReference>
<dbReference type="PANTHER" id="PTHR22911:SF52">
    <property type="entry name" value="SOLUTE CARRIER FAMILY 35 MEMBER G2"/>
    <property type="match status" value="1"/>
</dbReference>
<dbReference type="Pfam" id="PF00892">
    <property type="entry name" value="EamA"/>
    <property type="match status" value="2"/>
</dbReference>
<dbReference type="SUPFAM" id="SSF103481">
    <property type="entry name" value="Multidrug resistance efflux transporter EmrE"/>
    <property type="match status" value="2"/>
</dbReference>
<proteinExistence type="evidence at transcript level"/>
<evidence type="ECO:0000250" key="1">
    <source>
        <dbReference type="UniProtKB" id="Q8TBE7"/>
    </source>
</evidence>
<evidence type="ECO:0000255" key="2"/>
<evidence type="ECO:0000305" key="3"/>
<sequence>MDSSSQKYLVKKRVKIHPNTVTVKYTSHYPQPGEEGYEDGNEDTGVFMEDSPKTRLLNAGKKRERTFFGTIDTQLQPAQLPKPREMGHFQNFPEGNILQSRKMWIVLFGSAVAHGCVALITRLISDRSKVPSLELIFIRSILQVLSVTAVCYYHEPPFGPKGYRLRLFFYGVCNVISITCAYTSFSIVPPSNGTIMWRATTTVFSAILAFLLVDEGMASVDIVTVVGSVFGVCLVMIPNIVKEENSLLSTWKEAFGYTMTVMAGLTTALSMIVYRSIKDNISMWTALFTFSWTGTVWGASTMFLLQEPIVPLDGETWSYLLAICLCSTAAFLGVYYALSKFHPALVSTVQHLEIVIAMVLQLVVLRILPGTYDLVGGAVILVSVVFLACHKLSWKNLGRQDYQEIVDSSIK</sequence>
<comment type="subcellular location">
    <subcellularLocation>
        <location evidence="1">Cell membrane</location>
        <topology evidence="1">Multi-pass membrane protein</topology>
    </subcellularLocation>
    <subcellularLocation>
        <location evidence="1">Cytoplasmic vesicle</location>
        <location evidence="1">Secretory vesicle</location>
        <location evidence="1">Synaptic vesicle membrane</location>
        <topology evidence="1">Multi-pass membrane protein</topology>
    </subcellularLocation>
</comment>
<comment type="similarity">
    <text evidence="3">Belongs to the SLC35G solute transporter family.</text>
</comment>
<accession>Q5ZJZ4</accession>
<name>S35G2_CHICK</name>
<gene>
    <name type="primary">SLC35G2</name>
    <name type="synonym">TMEM22</name>
    <name type="ORF">RCJMB04_14e7</name>
</gene>